<dbReference type="EMBL" id="M99427">
    <property type="protein sequence ID" value="AAA26043.1"/>
    <property type="molecule type" value="Genomic_DNA"/>
</dbReference>
<dbReference type="SMR" id="Q52451"/>
<dbReference type="GO" id="GO:0030089">
    <property type="term" value="C:phycobilisome"/>
    <property type="evidence" value="ECO:0007669"/>
    <property type="project" value="UniProtKB-KW"/>
</dbReference>
<dbReference type="GO" id="GO:0031676">
    <property type="term" value="C:plasma membrane-derived thylakoid membrane"/>
    <property type="evidence" value="ECO:0007669"/>
    <property type="project" value="UniProtKB-SubCell"/>
</dbReference>
<dbReference type="GO" id="GO:0015979">
    <property type="term" value="P:photosynthesis"/>
    <property type="evidence" value="ECO:0007669"/>
    <property type="project" value="UniProtKB-KW"/>
</dbReference>
<dbReference type="CDD" id="cd14768">
    <property type="entry name" value="PC_PEC_beta"/>
    <property type="match status" value="1"/>
</dbReference>
<dbReference type="Gene3D" id="1.10.490.20">
    <property type="entry name" value="Phycocyanins"/>
    <property type="match status" value="1"/>
</dbReference>
<dbReference type="InterPro" id="IPR009050">
    <property type="entry name" value="Globin-like_sf"/>
</dbReference>
<dbReference type="InterPro" id="IPR012128">
    <property type="entry name" value="Phycobilisome_asu/bsu"/>
</dbReference>
<dbReference type="InterPro" id="IPR038719">
    <property type="entry name" value="Phycobilisome_asu/bsu_sf"/>
</dbReference>
<dbReference type="InterPro" id="IPR006247">
    <property type="entry name" value="Phycocyanin_b"/>
</dbReference>
<dbReference type="NCBIfam" id="TIGR01339">
    <property type="entry name" value="phycocy_beta"/>
    <property type="match status" value="1"/>
</dbReference>
<dbReference type="PANTHER" id="PTHR34011:SF7">
    <property type="entry name" value="C-PHYCOCYANIN BETA SUBUNIT"/>
    <property type="match status" value="1"/>
</dbReference>
<dbReference type="PANTHER" id="PTHR34011">
    <property type="entry name" value="PHYCOBILISOME 32.1 KDA LINKER POLYPEPTIDE, PHYCOCYANIN-ASSOCIATED, ROD 2-RELATED"/>
    <property type="match status" value="1"/>
</dbReference>
<dbReference type="Pfam" id="PF00502">
    <property type="entry name" value="Phycobilisome"/>
    <property type="match status" value="1"/>
</dbReference>
<dbReference type="PIRSF" id="PIRSF000081">
    <property type="entry name" value="Phycocyanin"/>
    <property type="match status" value="1"/>
</dbReference>
<dbReference type="SUPFAM" id="SSF46458">
    <property type="entry name" value="Globin-like"/>
    <property type="match status" value="1"/>
</dbReference>
<reference key="1">
    <citation type="submission" date="1992-08" db="EMBL/GenBank/DDBJ databases">
        <title>Organization and transcription of the genes encoding two differentially expressed phycocyanins in the cyanobacterium Pseudanabaena sp. PCC 7409.</title>
        <authorList>
            <person name="Dubbs J.M."/>
            <person name="Bryant D.A."/>
        </authorList>
    </citation>
    <scope>NUCLEOTIDE SEQUENCE [GENOMIC DNA]</scope>
</reference>
<organism>
    <name type="scientific">Pseudanabaena tenuis (strain PCC 7409)</name>
    <dbReference type="NCBI Taxonomy" id="29415"/>
    <lineage>
        <taxon>Bacteria</taxon>
        <taxon>Bacillati</taxon>
        <taxon>Cyanobacteriota</taxon>
        <taxon>Cyanophyceae</taxon>
        <taxon>Pseudanabaenales</taxon>
        <taxon>Pseudanabaenaceae</taxon>
        <taxon>Pseudanabaena</taxon>
    </lineage>
</organism>
<accession>Q52451</accession>
<gene>
    <name type="primary">cpcB2</name>
</gene>
<evidence type="ECO:0000250" key="1"/>
<evidence type="ECO:0000250" key="2">
    <source>
        <dbReference type="UniProtKB" id="P06539"/>
    </source>
</evidence>
<evidence type="ECO:0000305" key="3"/>
<protein>
    <recommendedName>
        <fullName>C-phycocyanin-2 beta subunit</fullName>
    </recommendedName>
</protein>
<comment type="function">
    <text>Light-harvesting photosynthetic bile pigment-protein from the phycobiliprotein complex (phycobilisome, PBS). Phycocyanin is the major phycobiliprotein in the PBS rod.</text>
</comment>
<comment type="subunit">
    <text evidence="2">Heterodimer of an alpha and a beta subunit, which further assembles into trimers and the trimers into hexamers.</text>
</comment>
<comment type="subcellular location">
    <subcellularLocation>
        <location evidence="1">Cellular thylakoid membrane</location>
        <topology evidence="1">Peripheral membrane protein</topology>
        <orientation evidence="1">Cytoplasmic side</orientation>
    </subcellularLocation>
    <text evidence="1">Part of the phycobilisome rod.</text>
</comment>
<comment type="PTM">
    <text evidence="1 2">Contains two covalently linked bilin chromophores.</text>
</comment>
<comment type="similarity">
    <text evidence="3">Belongs to the phycobiliprotein family.</text>
</comment>
<sequence>MLDAFTKVVAQADTRGRFVSDSQIDALKQLVADGTKRLDVVNRITASSSSIVTDAARALFEDQPQLIAPGGNAYTNRRIAACMRDMDIILRYVTYAVFSGDASVLEDRCLNGLRETYSALGVPGGSVAVGIDKMKAAAIALANDPNGVTRGDCSALMSELASYFDKAAAAVG</sequence>
<proteinExistence type="inferred from homology"/>
<feature type="chain" id="PRO_0000199153" description="C-phycocyanin-2 beta subunit">
    <location>
        <begin position="1"/>
        <end position="172"/>
    </location>
</feature>
<feature type="binding site" description="covalent" evidence="2">
    <location>
        <position position="82"/>
    </location>
    <ligand>
        <name>(2R,3E)-phycocyanobilin</name>
        <dbReference type="ChEBI" id="CHEBI:85275"/>
        <label>1</label>
    </ligand>
</feature>
<feature type="binding site" description="covalent" evidence="2">
    <location>
        <position position="153"/>
    </location>
    <ligand>
        <name>(2R,3E)-phycocyanobilin</name>
        <dbReference type="ChEBI" id="CHEBI:85275"/>
        <label>2</label>
    </ligand>
</feature>
<feature type="modified residue" description="N4-methylasparagine" evidence="2">
    <location>
        <position position="72"/>
    </location>
</feature>
<keyword id="KW-0042">Antenna complex</keyword>
<keyword id="KW-0089">Bile pigment</keyword>
<keyword id="KW-0157">Chromophore</keyword>
<keyword id="KW-0249">Electron transport</keyword>
<keyword id="KW-0472">Membrane</keyword>
<keyword id="KW-0488">Methylation</keyword>
<keyword id="KW-0602">Photosynthesis</keyword>
<keyword id="KW-0605">Phycobilisome</keyword>
<keyword id="KW-0793">Thylakoid</keyword>
<keyword id="KW-0813">Transport</keyword>
<name>PHCB2_PSETP</name>